<proteinExistence type="inferred from homology"/>
<gene>
    <name evidence="1" type="primary">rplC</name>
    <name type="ordered locus">SDY_3496</name>
</gene>
<keyword id="KW-0488">Methylation</keyword>
<keyword id="KW-1185">Reference proteome</keyword>
<keyword id="KW-0687">Ribonucleoprotein</keyword>
<keyword id="KW-0689">Ribosomal protein</keyword>
<keyword id="KW-0694">RNA-binding</keyword>
<keyword id="KW-0699">rRNA-binding</keyword>
<sequence>MIGLVGKKVGMTRIFTEDGVSIPVTVIEVEANRVTQVKDLANDGYRAIQVTTGAKKANRVTKPEAGHFAKAGVEAGRGLWEFRLAEGEEFTVGQSISVELFADVKKVDVTGTSKGKGFAGTVKRWNFRTQDATHGNSLSHRVPGSIGQNQTPGKVFKGKKMAGQMGNERVTVQSLDVVRVDAERNLLLVKGAVPGATGSDLIVKPAVKA</sequence>
<accession>Q32B31</accession>
<name>RL3_SHIDS</name>
<comment type="function">
    <text evidence="1">One of the primary rRNA binding proteins, it binds directly near the 3'-end of the 23S rRNA, where it nucleates assembly of the 50S subunit.</text>
</comment>
<comment type="subunit">
    <text evidence="1">Part of the 50S ribosomal subunit. Forms a cluster with proteins L14 and L19.</text>
</comment>
<comment type="PTM">
    <text evidence="1">Methylated by PrmB.</text>
</comment>
<comment type="similarity">
    <text evidence="1">Belongs to the universal ribosomal protein uL3 family.</text>
</comment>
<organism>
    <name type="scientific">Shigella dysenteriae serotype 1 (strain Sd197)</name>
    <dbReference type="NCBI Taxonomy" id="300267"/>
    <lineage>
        <taxon>Bacteria</taxon>
        <taxon>Pseudomonadati</taxon>
        <taxon>Pseudomonadota</taxon>
        <taxon>Gammaproteobacteria</taxon>
        <taxon>Enterobacterales</taxon>
        <taxon>Enterobacteriaceae</taxon>
        <taxon>Shigella</taxon>
    </lineage>
</organism>
<feature type="chain" id="PRO_0000241410" description="Large ribosomal subunit protein uL3">
    <location>
        <begin position="1"/>
        <end position="209"/>
    </location>
</feature>
<feature type="modified residue" description="N5-methylglutamine" evidence="1">
    <location>
        <position position="150"/>
    </location>
</feature>
<evidence type="ECO:0000255" key="1">
    <source>
        <dbReference type="HAMAP-Rule" id="MF_01325"/>
    </source>
</evidence>
<evidence type="ECO:0000305" key="2"/>
<reference key="1">
    <citation type="journal article" date="2005" name="Nucleic Acids Res.">
        <title>Genome dynamics and diversity of Shigella species, the etiologic agents of bacillary dysentery.</title>
        <authorList>
            <person name="Yang F."/>
            <person name="Yang J."/>
            <person name="Zhang X."/>
            <person name="Chen L."/>
            <person name="Jiang Y."/>
            <person name="Yan Y."/>
            <person name="Tang X."/>
            <person name="Wang J."/>
            <person name="Xiong Z."/>
            <person name="Dong J."/>
            <person name="Xue Y."/>
            <person name="Zhu Y."/>
            <person name="Xu X."/>
            <person name="Sun L."/>
            <person name="Chen S."/>
            <person name="Nie H."/>
            <person name="Peng J."/>
            <person name="Xu J."/>
            <person name="Wang Y."/>
            <person name="Yuan Z."/>
            <person name="Wen Y."/>
            <person name="Yao Z."/>
            <person name="Shen Y."/>
            <person name="Qiang B."/>
            <person name="Hou Y."/>
            <person name="Yu J."/>
            <person name="Jin Q."/>
        </authorList>
    </citation>
    <scope>NUCLEOTIDE SEQUENCE [LARGE SCALE GENOMIC DNA]</scope>
    <source>
        <strain>Sd197</strain>
    </source>
</reference>
<protein>
    <recommendedName>
        <fullName evidence="1">Large ribosomal subunit protein uL3</fullName>
    </recommendedName>
    <alternativeName>
        <fullName evidence="2">50S ribosomal protein L3</fullName>
    </alternativeName>
</protein>
<dbReference type="EMBL" id="CP000034">
    <property type="protein sequence ID" value="ABB63474.1"/>
    <property type="molecule type" value="Genomic_DNA"/>
</dbReference>
<dbReference type="RefSeq" id="WP_000579833.1">
    <property type="nucleotide sequence ID" value="NC_007606.1"/>
</dbReference>
<dbReference type="RefSeq" id="YP_404965.1">
    <property type="nucleotide sequence ID" value="NC_007606.1"/>
</dbReference>
<dbReference type="SMR" id="Q32B31"/>
<dbReference type="STRING" id="300267.SDY_3496"/>
<dbReference type="EnsemblBacteria" id="ABB63474">
    <property type="protein sequence ID" value="ABB63474"/>
    <property type="gene ID" value="SDY_3496"/>
</dbReference>
<dbReference type="GeneID" id="86948184"/>
<dbReference type="KEGG" id="sdy:SDY_3496"/>
<dbReference type="PATRIC" id="fig|300267.13.peg.4149"/>
<dbReference type="HOGENOM" id="CLU_044142_4_1_6"/>
<dbReference type="Proteomes" id="UP000002716">
    <property type="component" value="Chromosome"/>
</dbReference>
<dbReference type="GO" id="GO:0022625">
    <property type="term" value="C:cytosolic large ribosomal subunit"/>
    <property type="evidence" value="ECO:0007669"/>
    <property type="project" value="TreeGrafter"/>
</dbReference>
<dbReference type="GO" id="GO:0019843">
    <property type="term" value="F:rRNA binding"/>
    <property type="evidence" value="ECO:0007669"/>
    <property type="project" value="UniProtKB-UniRule"/>
</dbReference>
<dbReference type="GO" id="GO:0003735">
    <property type="term" value="F:structural constituent of ribosome"/>
    <property type="evidence" value="ECO:0007669"/>
    <property type="project" value="InterPro"/>
</dbReference>
<dbReference type="GO" id="GO:0006412">
    <property type="term" value="P:translation"/>
    <property type="evidence" value="ECO:0007669"/>
    <property type="project" value="UniProtKB-UniRule"/>
</dbReference>
<dbReference type="FunFam" id="2.40.30.10:FF:000004">
    <property type="entry name" value="50S ribosomal protein L3"/>
    <property type="match status" value="1"/>
</dbReference>
<dbReference type="FunFam" id="3.30.160.810:FF:000001">
    <property type="entry name" value="50S ribosomal protein L3"/>
    <property type="match status" value="1"/>
</dbReference>
<dbReference type="Gene3D" id="3.30.160.810">
    <property type="match status" value="1"/>
</dbReference>
<dbReference type="Gene3D" id="2.40.30.10">
    <property type="entry name" value="Translation factors"/>
    <property type="match status" value="1"/>
</dbReference>
<dbReference type="HAMAP" id="MF_01325_B">
    <property type="entry name" value="Ribosomal_uL3_B"/>
    <property type="match status" value="1"/>
</dbReference>
<dbReference type="InterPro" id="IPR000597">
    <property type="entry name" value="Ribosomal_uL3"/>
</dbReference>
<dbReference type="InterPro" id="IPR019927">
    <property type="entry name" value="Ribosomal_uL3_bac/org-type"/>
</dbReference>
<dbReference type="InterPro" id="IPR019926">
    <property type="entry name" value="Ribosomal_uL3_CS"/>
</dbReference>
<dbReference type="InterPro" id="IPR009000">
    <property type="entry name" value="Transl_B-barrel_sf"/>
</dbReference>
<dbReference type="NCBIfam" id="TIGR03625">
    <property type="entry name" value="L3_bact"/>
    <property type="match status" value="1"/>
</dbReference>
<dbReference type="PANTHER" id="PTHR11229">
    <property type="entry name" value="50S RIBOSOMAL PROTEIN L3"/>
    <property type="match status" value="1"/>
</dbReference>
<dbReference type="PANTHER" id="PTHR11229:SF16">
    <property type="entry name" value="LARGE RIBOSOMAL SUBUNIT PROTEIN UL3C"/>
    <property type="match status" value="1"/>
</dbReference>
<dbReference type="Pfam" id="PF00297">
    <property type="entry name" value="Ribosomal_L3"/>
    <property type="match status" value="1"/>
</dbReference>
<dbReference type="SUPFAM" id="SSF50447">
    <property type="entry name" value="Translation proteins"/>
    <property type="match status" value="1"/>
</dbReference>
<dbReference type="PROSITE" id="PS00474">
    <property type="entry name" value="RIBOSOMAL_L3"/>
    <property type="match status" value="1"/>
</dbReference>